<feature type="chain" id="PRO_1000166764" description="Small ribosomal subunit protein uS14">
    <location>
        <begin position="1"/>
        <end position="61"/>
    </location>
</feature>
<feature type="binding site" evidence="1">
    <location>
        <position position="24"/>
    </location>
    <ligand>
        <name>Zn(2+)</name>
        <dbReference type="ChEBI" id="CHEBI:29105"/>
    </ligand>
</feature>
<feature type="binding site" evidence="1">
    <location>
        <position position="27"/>
    </location>
    <ligand>
        <name>Zn(2+)</name>
        <dbReference type="ChEBI" id="CHEBI:29105"/>
    </ligand>
</feature>
<feature type="binding site" evidence="1">
    <location>
        <position position="40"/>
    </location>
    <ligand>
        <name>Zn(2+)</name>
        <dbReference type="ChEBI" id="CHEBI:29105"/>
    </ligand>
</feature>
<feature type="binding site" evidence="1">
    <location>
        <position position="43"/>
    </location>
    <ligand>
        <name>Zn(2+)</name>
        <dbReference type="ChEBI" id="CHEBI:29105"/>
    </ligand>
</feature>
<sequence>MARKALIEKWNKTPKHSTRAYTRCRICGRPHAVLKKYGICRICFRELAYKGEIPGCKKASW</sequence>
<evidence type="ECO:0000255" key="1">
    <source>
        <dbReference type="HAMAP-Rule" id="MF_01364"/>
    </source>
</evidence>
<evidence type="ECO:0000305" key="2"/>
<protein>
    <recommendedName>
        <fullName evidence="1">Small ribosomal subunit protein uS14</fullName>
    </recommendedName>
    <alternativeName>
        <fullName evidence="2">30S ribosomal protein S14 type Z</fullName>
    </alternativeName>
</protein>
<reference key="1">
    <citation type="submission" date="2008-10" db="EMBL/GenBank/DDBJ databases">
        <title>Genome sequence of Clostridium botulinum A2 Kyoto.</title>
        <authorList>
            <person name="Shrivastava S."/>
            <person name="Brinkac L.M."/>
            <person name="Brown J.L."/>
            <person name="Bruce D."/>
            <person name="Detter C.C."/>
            <person name="Johnson E.A."/>
            <person name="Munk C.A."/>
            <person name="Smith L.A."/>
            <person name="Smith T.J."/>
            <person name="Sutton G."/>
            <person name="Brettin T.S."/>
        </authorList>
    </citation>
    <scope>NUCLEOTIDE SEQUENCE [LARGE SCALE GENOMIC DNA]</scope>
    <source>
        <strain>Kyoto / Type A2</strain>
    </source>
</reference>
<organism>
    <name type="scientific">Clostridium botulinum (strain Kyoto / Type A2)</name>
    <dbReference type="NCBI Taxonomy" id="536232"/>
    <lineage>
        <taxon>Bacteria</taxon>
        <taxon>Bacillati</taxon>
        <taxon>Bacillota</taxon>
        <taxon>Clostridia</taxon>
        <taxon>Eubacteriales</taxon>
        <taxon>Clostridiaceae</taxon>
        <taxon>Clostridium</taxon>
    </lineage>
</organism>
<comment type="function">
    <text evidence="1">Binds 16S rRNA, required for the assembly of 30S particles and may also be responsible for determining the conformation of the 16S rRNA at the A site.</text>
</comment>
<comment type="cofactor">
    <cofactor evidence="1">
        <name>Zn(2+)</name>
        <dbReference type="ChEBI" id="CHEBI:29105"/>
    </cofactor>
    <text evidence="1">Binds 1 zinc ion per subunit.</text>
</comment>
<comment type="subunit">
    <text evidence="1">Part of the 30S ribosomal subunit. Contacts proteins S3 and S10.</text>
</comment>
<comment type="similarity">
    <text evidence="1">Belongs to the universal ribosomal protein uS14 family. Zinc-binding uS14 subfamily.</text>
</comment>
<keyword id="KW-0479">Metal-binding</keyword>
<keyword id="KW-0687">Ribonucleoprotein</keyword>
<keyword id="KW-0689">Ribosomal protein</keyword>
<keyword id="KW-0694">RNA-binding</keyword>
<keyword id="KW-0699">rRNA-binding</keyword>
<keyword id="KW-0862">Zinc</keyword>
<dbReference type="EMBL" id="CP001581">
    <property type="protein sequence ID" value="ACO85632.1"/>
    <property type="molecule type" value="Genomic_DNA"/>
</dbReference>
<dbReference type="RefSeq" id="WP_003357636.1">
    <property type="nucleotide sequence ID" value="NC_012563.1"/>
</dbReference>
<dbReference type="SMR" id="C1FMT8"/>
<dbReference type="KEGG" id="cby:CLM_3935"/>
<dbReference type="eggNOG" id="COG0199">
    <property type="taxonomic scope" value="Bacteria"/>
</dbReference>
<dbReference type="HOGENOM" id="CLU_139869_3_0_9"/>
<dbReference type="Proteomes" id="UP000001374">
    <property type="component" value="Chromosome"/>
</dbReference>
<dbReference type="GO" id="GO:0005737">
    <property type="term" value="C:cytoplasm"/>
    <property type="evidence" value="ECO:0007669"/>
    <property type="project" value="UniProtKB-ARBA"/>
</dbReference>
<dbReference type="GO" id="GO:0015935">
    <property type="term" value="C:small ribosomal subunit"/>
    <property type="evidence" value="ECO:0007669"/>
    <property type="project" value="TreeGrafter"/>
</dbReference>
<dbReference type="GO" id="GO:0019843">
    <property type="term" value="F:rRNA binding"/>
    <property type="evidence" value="ECO:0007669"/>
    <property type="project" value="UniProtKB-UniRule"/>
</dbReference>
<dbReference type="GO" id="GO:0003735">
    <property type="term" value="F:structural constituent of ribosome"/>
    <property type="evidence" value="ECO:0007669"/>
    <property type="project" value="InterPro"/>
</dbReference>
<dbReference type="GO" id="GO:0008270">
    <property type="term" value="F:zinc ion binding"/>
    <property type="evidence" value="ECO:0007669"/>
    <property type="project" value="UniProtKB-UniRule"/>
</dbReference>
<dbReference type="GO" id="GO:0006412">
    <property type="term" value="P:translation"/>
    <property type="evidence" value="ECO:0007669"/>
    <property type="project" value="UniProtKB-UniRule"/>
</dbReference>
<dbReference type="FunFam" id="4.10.830.10:FF:000001">
    <property type="entry name" value="30S ribosomal protein S14 type Z"/>
    <property type="match status" value="1"/>
</dbReference>
<dbReference type="Gene3D" id="4.10.830.10">
    <property type="entry name" value="30s Ribosomal Protein S14, Chain N"/>
    <property type="match status" value="1"/>
</dbReference>
<dbReference type="HAMAP" id="MF_01364_B">
    <property type="entry name" value="Ribosomal_uS14_2_B"/>
    <property type="match status" value="1"/>
</dbReference>
<dbReference type="InterPro" id="IPR001209">
    <property type="entry name" value="Ribosomal_uS14"/>
</dbReference>
<dbReference type="InterPro" id="IPR023053">
    <property type="entry name" value="Ribosomal_uS14_bact"/>
</dbReference>
<dbReference type="InterPro" id="IPR043140">
    <property type="entry name" value="Ribosomal_uS14_sf"/>
</dbReference>
<dbReference type="NCBIfam" id="NF005974">
    <property type="entry name" value="PRK08061.1"/>
    <property type="match status" value="1"/>
</dbReference>
<dbReference type="PANTHER" id="PTHR19836">
    <property type="entry name" value="30S RIBOSOMAL PROTEIN S14"/>
    <property type="match status" value="1"/>
</dbReference>
<dbReference type="PANTHER" id="PTHR19836:SF19">
    <property type="entry name" value="SMALL RIBOSOMAL SUBUNIT PROTEIN US14M"/>
    <property type="match status" value="1"/>
</dbReference>
<dbReference type="Pfam" id="PF00253">
    <property type="entry name" value="Ribosomal_S14"/>
    <property type="match status" value="1"/>
</dbReference>
<dbReference type="SUPFAM" id="SSF57716">
    <property type="entry name" value="Glucocorticoid receptor-like (DNA-binding domain)"/>
    <property type="match status" value="1"/>
</dbReference>
<gene>
    <name evidence="1" type="primary">rpsZ</name>
    <name evidence="1" type="synonym">rpsN</name>
    <name type="ordered locus">CLM_3935</name>
</gene>
<name>RS14Z_CLOBJ</name>
<proteinExistence type="inferred from homology"/>
<accession>C1FMT8</accession>